<reference key="1">
    <citation type="journal article" date="2001" name="J. Bacteriol.">
        <title>Genome of the bacterium Streptococcus pneumoniae strain R6.</title>
        <authorList>
            <person name="Hoskins J."/>
            <person name="Alborn W.E. Jr."/>
            <person name="Arnold J."/>
            <person name="Blaszczak L.C."/>
            <person name="Burgett S."/>
            <person name="DeHoff B.S."/>
            <person name="Estrem S.T."/>
            <person name="Fritz L."/>
            <person name="Fu D.-J."/>
            <person name="Fuller W."/>
            <person name="Geringer C."/>
            <person name="Gilmour R."/>
            <person name="Glass J.S."/>
            <person name="Khoja H."/>
            <person name="Kraft A.R."/>
            <person name="Lagace R.E."/>
            <person name="LeBlanc D.J."/>
            <person name="Lee L.N."/>
            <person name="Lefkowitz E.J."/>
            <person name="Lu J."/>
            <person name="Matsushima P."/>
            <person name="McAhren S.M."/>
            <person name="McHenney M."/>
            <person name="McLeaster K."/>
            <person name="Mundy C.W."/>
            <person name="Nicas T.I."/>
            <person name="Norris F.H."/>
            <person name="O'Gara M."/>
            <person name="Peery R.B."/>
            <person name="Robertson G.T."/>
            <person name="Rockey P."/>
            <person name="Sun P.-M."/>
            <person name="Winkler M.E."/>
            <person name="Yang Y."/>
            <person name="Young-Bellido M."/>
            <person name="Zhao G."/>
            <person name="Zook C.A."/>
            <person name="Baltz R.H."/>
            <person name="Jaskunas S.R."/>
            <person name="Rosteck P.R. Jr."/>
            <person name="Skatrud P.L."/>
            <person name="Glass J.I."/>
        </authorList>
    </citation>
    <scope>NUCLEOTIDE SEQUENCE [LARGE SCALE GENOMIC DNA]</scope>
    <source>
        <strain>ATCC BAA-255 / R6</strain>
    </source>
</reference>
<dbReference type="EC" id="5.4.99.12" evidence="1"/>
<dbReference type="EMBL" id="AE007317">
    <property type="protein sequence ID" value="AAL00255.1"/>
    <property type="molecule type" value="Genomic_DNA"/>
</dbReference>
<dbReference type="PIR" id="B98053">
    <property type="entry name" value="B98053"/>
</dbReference>
<dbReference type="RefSeq" id="NP_359044.1">
    <property type="nucleotide sequence ID" value="NC_003098.1"/>
</dbReference>
<dbReference type="RefSeq" id="WP_000199207.1">
    <property type="nucleotide sequence ID" value="NC_003098.1"/>
</dbReference>
<dbReference type="SMR" id="Q8CWQ1"/>
<dbReference type="STRING" id="171101.spr1451"/>
<dbReference type="KEGG" id="spr:spr1451"/>
<dbReference type="PATRIC" id="fig|171101.6.peg.1568"/>
<dbReference type="eggNOG" id="COG0101">
    <property type="taxonomic scope" value="Bacteria"/>
</dbReference>
<dbReference type="HOGENOM" id="CLU_014673_0_1_9"/>
<dbReference type="Proteomes" id="UP000000586">
    <property type="component" value="Chromosome"/>
</dbReference>
<dbReference type="GO" id="GO:0009982">
    <property type="term" value="F:pseudouridine synthase activity"/>
    <property type="evidence" value="ECO:0000318"/>
    <property type="project" value="GO_Central"/>
</dbReference>
<dbReference type="GO" id="GO:0003723">
    <property type="term" value="F:RNA binding"/>
    <property type="evidence" value="ECO:0007669"/>
    <property type="project" value="InterPro"/>
</dbReference>
<dbReference type="GO" id="GO:0160147">
    <property type="term" value="F:tRNA pseudouridine(38-40) synthase activity"/>
    <property type="evidence" value="ECO:0007669"/>
    <property type="project" value="UniProtKB-EC"/>
</dbReference>
<dbReference type="GO" id="GO:0031119">
    <property type="term" value="P:tRNA pseudouridine synthesis"/>
    <property type="evidence" value="ECO:0000318"/>
    <property type="project" value="GO_Central"/>
</dbReference>
<dbReference type="CDD" id="cd02570">
    <property type="entry name" value="PseudoU_synth_EcTruA"/>
    <property type="match status" value="1"/>
</dbReference>
<dbReference type="FunFam" id="3.30.70.580:FF:000001">
    <property type="entry name" value="tRNA pseudouridine synthase A"/>
    <property type="match status" value="1"/>
</dbReference>
<dbReference type="FunFam" id="3.30.70.660:FF:000009">
    <property type="entry name" value="tRNA pseudouridine synthase A"/>
    <property type="match status" value="1"/>
</dbReference>
<dbReference type="Gene3D" id="3.30.70.660">
    <property type="entry name" value="Pseudouridine synthase I, catalytic domain, C-terminal subdomain"/>
    <property type="match status" value="1"/>
</dbReference>
<dbReference type="Gene3D" id="3.30.70.580">
    <property type="entry name" value="Pseudouridine synthase I, catalytic domain, N-terminal subdomain"/>
    <property type="match status" value="1"/>
</dbReference>
<dbReference type="HAMAP" id="MF_00171">
    <property type="entry name" value="TruA"/>
    <property type="match status" value="1"/>
</dbReference>
<dbReference type="InterPro" id="IPR020103">
    <property type="entry name" value="PsdUridine_synth_cat_dom_sf"/>
</dbReference>
<dbReference type="InterPro" id="IPR001406">
    <property type="entry name" value="PsdUridine_synth_TruA"/>
</dbReference>
<dbReference type="InterPro" id="IPR020097">
    <property type="entry name" value="PsdUridine_synth_TruA_a/b_dom"/>
</dbReference>
<dbReference type="InterPro" id="IPR020095">
    <property type="entry name" value="PsdUridine_synth_TruA_C"/>
</dbReference>
<dbReference type="InterPro" id="IPR020094">
    <property type="entry name" value="TruA/RsuA/RluB/E/F_N"/>
</dbReference>
<dbReference type="NCBIfam" id="TIGR00071">
    <property type="entry name" value="hisT_truA"/>
    <property type="match status" value="1"/>
</dbReference>
<dbReference type="PANTHER" id="PTHR11142">
    <property type="entry name" value="PSEUDOURIDYLATE SYNTHASE"/>
    <property type="match status" value="1"/>
</dbReference>
<dbReference type="PANTHER" id="PTHR11142:SF0">
    <property type="entry name" value="TRNA PSEUDOURIDINE SYNTHASE-LIKE 1"/>
    <property type="match status" value="1"/>
</dbReference>
<dbReference type="Pfam" id="PF01416">
    <property type="entry name" value="PseudoU_synth_1"/>
    <property type="match status" value="2"/>
</dbReference>
<dbReference type="PIRSF" id="PIRSF001430">
    <property type="entry name" value="tRNA_psdUrid_synth"/>
    <property type="match status" value="1"/>
</dbReference>
<dbReference type="SUPFAM" id="SSF55120">
    <property type="entry name" value="Pseudouridine synthase"/>
    <property type="match status" value="1"/>
</dbReference>
<sequence>MTRYKATISYDGYAFAGFQRQSHARSVQEEIEKTLTRLNKGQTITVHGAGRTDSGVHALGQVIHFDLPYQMDEEKLRFALDTQSPEDIDVISIELVADDFHCRYAKHSKTYEFIVDRGRPKNPMRRHYATHFPYPLDVERMQIAIKKLEGTHDFTGFTASGTSVEDKVRTITEASLIVDETGQFLTFTFSGNGFLYKQIRNMVGTLLKIGNNRMPVEQIDLILEKKDRQLAGPTAAPNGLYLKEIRYEE</sequence>
<organism>
    <name type="scientific">Streptococcus pneumoniae (strain ATCC BAA-255 / R6)</name>
    <dbReference type="NCBI Taxonomy" id="171101"/>
    <lineage>
        <taxon>Bacteria</taxon>
        <taxon>Bacillati</taxon>
        <taxon>Bacillota</taxon>
        <taxon>Bacilli</taxon>
        <taxon>Lactobacillales</taxon>
        <taxon>Streptococcaceae</taxon>
        <taxon>Streptococcus</taxon>
    </lineage>
</organism>
<proteinExistence type="inferred from homology"/>
<feature type="chain" id="PRO_0000057463" description="tRNA pseudouridine synthase A">
    <location>
        <begin position="1"/>
        <end position="249"/>
    </location>
</feature>
<feature type="active site" description="Nucleophile" evidence="1">
    <location>
        <position position="53"/>
    </location>
</feature>
<feature type="binding site" evidence="1">
    <location>
        <position position="111"/>
    </location>
    <ligand>
        <name>substrate</name>
    </ligand>
</feature>
<protein>
    <recommendedName>
        <fullName evidence="1">tRNA pseudouridine synthase A</fullName>
        <ecNumber evidence="1">5.4.99.12</ecNumber>
    </recommendedName>
    <alternativeName>
        <fullName evidence="1">tRNA pseudouridine(38-40) synthase</fullName>
    </alternativeName>
    <alternativeName>
        <fullName evidence="1">tRNA pseudouridylate synthase I</fullName>
    </alternativeName>
    <alternativeName>
        <fullName evidence="1">tRNA-uridine isomerase I</fullName>
    </alternativeName>
</protein>
<accession>Q8CWQ1</accession>
<name>TRUA_STRR6</name>
<comment type="function">
    <text evidence="1">Formation of pseudouridine at positions 38, 39 and 40 in the anticodon stem and loop of transfer RNAs.</text>
</comment>
<comment type="catalytic activity">
    <reaction evidence="1">
        <text>uridine(38/39/40) in tRNA = pseudouridine(38/39/40) in tRNA</text>
        <dbReference type="Rhea" id="RHEA:22376"/>
        <dbReference type="Rhea" id="RHEA-COMP:10085"/>
        <dbReference type="Rhea" id="RHEA-COMP:10087"/>
        <dbReference type="ChEBI" id="CHEBI:65314"/>
        <dbReference type="ChEBI" id="CHEBI:65315"/>
        <dbReference type="EC" id="5.4.99.12"/>
    </reaction>
</comment>
<comment type="subunit">
    <text evidence="1">Homodimer.</text>
</comment>
<comment type="similarity">
    <text evidence="1">Belongs to the tRNA pseudouridine synthase TruA family.</text>
</comment>
<keyword id="KW-0413">Isomerase</keyword>
<keyword id="KW-1185">Reference proteome</keyword>
<keyword id="KW-0819">tRNA processing</keyword>
<evidence type="ECO:0000255" key="1">
    <source>
        <dbReference type="HAMAP-Rule" id="MF_00171"/>
    </source>
</evidence>
<gene>
    <name evidence="1" type="primary">truA</name>
    <name type="ordered locus">spr1451</name>
</gene>